<name>PYRD_BURCM</name>
<evidence type="ECO:0000255" key="1">
    <source>
        <dbReference type="HAMAP-Rule" id="MF_00225"/>
    </source>
</evidence>
<evidence type="ECO:0000305" key="2"/>
<sequence length="345" mass="36748">MFSSLYPLARASLFKMDAEDAHHLTLRALGAAGRTGLACALSARVPDAPRTVMGLTFRNPVGLAAGLDKDGAAIDGLASLGFGFIEVGTVTPRPQPGNPRPRMFRLPQADALINRMGFNNHGVDQFVKNVQAARYRGILGLNIGKNADTPIERAAEDYLYCLERVYPFASYVTINISSPNTKNLRQLQGAGELDALLAALKDKQQRLADLHGKLVPLALKIAPDLDDEQVKEIGDTLLRHKIEAVIATNTTLSRAAVQGLPHADEAGGLSGRPVFDASNEVIRKLHAEVGSAVPIIGVGGIFSGEDARVKLAAGASLVQLYTGFIYRGPALVAECVKAIARERTA</sequence>
<dbReference type="EC" id="1.3.5.2" evidence="1"/>
<dbReference type="EMBL" id="CP000440">
    <property type="protein sequence ID" value="ABI87013.1"/>
    <property type="status" value="ALT_INIT"/>
    <property type="molecule type" value="Genomic_DNA"/>
</dbReference>
<dbReference type="RefSeq" id="WP_006751029.1">
    <property type="nucleotide sequence ID" value="NZ_CP009798.1"/>
</dbReference>
<dbReference type="SMR" id="Q0BFR0"/>
<dbReference type="KEGG" id="bam:Bamb_1455"/>
<dbReference type="PATRIC" id="fig|339670.21.peg.82"/>
<dbReference type="eggNOG" id="COG0167">
    <property type="taxonomic scope" value="Bacteria"/>
</dbReference>
<dbReference type="UniPathway" id="UPA00070">
    <property type="reaction ID" value="UER00946"/>
</dbReference>
<dbReference type="Proteomes" id="UP000000662">
    <property type="component" value="Chromosome 1"/>
</dbReference>
<dbReference type="GO" id="GO:0005737">
    <property type="term" value="C:cytoplasm"/>
    <property type="evidence" value="ECO:0007669"/>
    <property type="project" value="InterPro"/>
</dbReference>
<dbReference type="GO" id="GO:0005886">
    <property type="term" value="C:plasma membrane"/>
    <property type="evidence" value="ECO:0007669"/>
    <property type="project" value="UniProtKB-SubCell"/>
</dbReference>
<dbReference type="GO" id="GO:0106430">
    <property type="term" value="F:dihydroorotate dehydrogenase (quinone) activity"/>
    <property type="evidence" value="ECO:0007669"/>
    <property type="project" value="UniProtKB-EC"/>
</dbReference>
<dbReference type="GO" id="GO:0006207">
    <property type="term" value="P:'de novo' pyrimidine nucleobase biosynthetic process"/>
    <property type="evidence" value="ECO:0007669"/>
    <property type="project" value="InterPro"/>
</dbReference>
<dbReference type="GO" id="GO:0044205">
    <property type="term" value="P:'de novo' UMP biosynthetic process"/>
    <property type="evidence" value="ECO:0007669"/>
    <property type="project" value="UniProtKB-UniRule"/>
</dbReference>
<dbReference type="CDD" id="cd04738">
    <property type="entry name" value="DHOD_2_like"/>
    <property type="match status" value="1"/>
</dbReference>
<dbReference type="FunFam" id="3.20.20.70:FF:000028">
    <property type="entry name" value="Dihydroorotate dehydrogenase (quinone)"/>
    <property type="match status" value="1"/>
</dbReference>
<dbReference type="Gene3D" id="3.20.20.70">
    <property type="entry name" value="Aldolase class I"/>
    <property type="match status" value="1"/>
</dbReference>
<dbReference type="HAMAP" id="MF_00225">
    <property type="entry name" value="DHO_dh_type2"/>
    <property type="match status" value="1"/>
</dbReference>
<dbReference type="InterPro" id="IPR013785">
    <property type="entry name" value="Aldolase_TIM"/>
</dbReference>
<dbReference type="InterPro" id="IPR050074">
    <property type="entry name" value="DHO_dehydrogenase"/>
</dbReference>
<dbReference type="InterPro" id="IPR012135">
    <property type="entry name" value="Dihydroorotate_DH_1_2"/>
</dbReference>
<dbReference type="InterPro" id="IPR005719">
    <property type="entry name" value="Dihydroorotate_DH_2"/>
</dbReference>
<dbReference type="InterPro" id="IPR005720">
    <property type="entry name" value="Dihydroorotate_DH_cat"/>
</dbReference>
<dbReference type="InterPro" id="IPR001295">
    <property type="entry name" value="Dihydroorotate_DH_CS"/>
</dbReference>
<dbReference type="NCBIfam" id="NF003644">
    <property type="entry name" value="PRK05286.1-1"/>
    <property type="match status" value="1"/>
</dbReference>
<dbReference type="NCBIfam" id="NF003645">
    <property type="entry name" value="PRK05286.1-2"/>
    <property type="match status" value="1"/>
</dbReference>
<dbReference type="NCBIfam" id="NF003646">
    <property type="entry name" value="PRK05286.1-4"/>
    <property type="match status" value="1"/>
</dbReference>
<dbReference type="NCBIfam" id="NF003652">
    <property type="entry name" value="PRK05286.2-5"/>
    <property type="match status" value="1"/>
</dbReference>
<dbReference type="NCBIfam" id="TIGR01036">
    <property type="entry name" value="pyrD_sub2"/>
    <property type="match status" value="1"/>
</dbReference>
<dbReference type="PANTHER" id="PTHR48109:SF4">
    <property type="entry name" value="DIHYDROOROTATE DEHYDROGENASE (QUINONE), MITOCHONDRIAL"/>
    <property type="match status" value="1"/>
</dbReference>
<dbReference type="PANTHER" id="PTHR48109">
    <property type="entry name" value="DIHYDROOROTATE DEHYDROGENASE (QUINONE), MITOCHONDRIAL-RELATED"/>
    <property type="match status" value="1"/>
</dbReference>
<dbReference type="Pfam" id="PF01180">
    <property type="entry name" value="DHO_dh"/>
    <property type="match status" value="1"/>
</dbReference>
<dbReference type="PIRSF" id="PIRSF000164">
    <property type="entry name" value="DHO_oxidase"/>
    <property type="match status" value="1"/>
</dbReference>
<dbReference type="SUPFAM" id="SSF51395">
    <property type="entry name" value="FMN-linked oxidoreductases"/>
    <property type="match status" value="1"/>
</dbReference>
<dbReference type="PROSITE" id="PS00911">
    <property type="entry name" value="DHODEHASE_1"/>
    <property type="match status" value="1"/>
</dbReference>
<dbReference type="PROSITE" id="PS00912">
    <property type="entry name" value="DHODEHASE_2"/>
    <property type="match status" value="1"/>
</dbReference>
<protein>
    <recommendedName>
        <fullName evidence="1">Dihydroorotate dehydrogenase (quinone)</fullName>
        <ecNumber evidence="1">1.3.5.2</ecNumber>
    </recommendedName>
    <alternativeName>
        <fullName evidence="1">DHOdehase</fullName>
        <shortName evidence="1">DHOD</shortName>
        <shortName evidence="1">DHODase</shortName>
    </alternativeName>
    <alternativeName>
        <fullName evidence="1">Dihydroorotate oxidase</fullName>
    </alternativeName>
</protein>
<proteinExistence type="inferred from homology"/>
<comment type="function">
    <text evidence="1">Catalyzes the conversion of dihydroorotate to orotate with quinone as electron acceptor.</text>
</comment>
<comment type="catalytic activity">
    <reaction evidence="1">
        <text>(S)-dihydroorotate + a quinone = orotate + a quinol</text>
        <dbReference type="Rhea" id="RHEA:30187"/>
        <dbReference type="ChEBI" id="CHEBI:24646"/>
        <dbReference type="ChEBI" id="CHEBI:30839"/>
        <dbReference type="ChEBI" id="CHEBI:30864"/>
        <dbReference type="ChEBI" id="CHEBI:132124"/>
        <dbReference type="EC" id="1.3.5.2"/>
    </reaction>
</comment>
<comment type="cofactor">
    <cofactor evidence="1">
        <name>FMN</name>
        <dbReference type="ChEBI" id="CHEBI:58210"/>
    </cofactor>
    <text evidence="1">Binds 1 FMN per subunit.</text>
</comment>
<comment type="pathway">
    <text evidence="1">Pyrimidine metabolism; UMP biosynthesis via de novo pathway; orotate from (S)-dihydroorotate (quinone route): step 1/1.</text>
</comment>
<comment type="subunit">
    <text evidence="1">Monomer.</text>
</comment>
<comment type="subcellular location">
    <subcellularLocation>
        <location evidence="1">Cell membrane</location>
        <topology evidence="1">Peripheral membrane protein</topology>
    </subcellularLocation>
</comment>
<comment type="similarity">
    <text evidence="1">Belongs to the dihydroorotate dehydrogenase family. Type 2 subfamily.</text>
</comment>
<comment type="sequence caution" evidence="2">
    <conflict type="erroneous initiation">
        <sequence resource="EMBL-CDS" id="ABI87013"/>
    </conflict>
</comment>
<accession>Q0BFR0</accession>
<keyword id="KW-1003">Cell membrane</keyword>
<keyword id="KW-0285">Flavoprotein</keyword>
<keyword id="KW-0288">FMN</keyword>
<keyword id="KW-0472">Membrane</keyword>
<keyword id="KW-0560">Oxidoreductase</keyword>
<keyword id="KW-0665">Pyrimidine biosynthesis</keyword>
<reference key="1">
    <citation type="submission" date="2006-08" db="EMBL/GenBank/DDBJ databases">
        <title>Complete sequence of chromosome 1 of Burkholderia cepacia AMMD.</title>
        <authorList>
            <person name="Copeland A."/>
            <person name="Lucas S."/>
            <person name="Lapidus A."/>
            <person name="Barry K."/>
            <person name="Detter J.C."/>
            <person name="Glavina del Rio T."/>
            <person name="Hammon N."/>
            <person name="Israni S."/>
            <person name="Pitluck S."/>
            <person name="Bruce D."/>
            <person name="Chain P."/>
            <person name="Malfatti S."/>
            <person name="Shin M."/>
            <person name="Vergez L."/>
            <person name="Schmutz J."/>
            <person name="Larimer F."/>
            <person name="Land M."/>
            <person name="Hauser L."/>
            <person name="Kyrpides N."/>
            <person name="Kim E."/>
            <person name="Parke J."/>
            <person name="Coenye T."/>
            <person name="Konstantinidis K."/>
            <person name="Ramette A."/>
            <person name="Tiedje J."/>
            <person name="Richardson P."/>
        </authorList>
    </citation>
    <scope>NUCLEOTIDE SEQUENCE [LARGE SCALE GENOMIC DNA]</scope>
    <source>
        <strain>ATCC BAA-244 / DSM 16087 / CCUG 44356 / LMG 19182 / AMMD</strain>
    </source>
</reference>
<organism>
    <name type="scientific">Burkholderia ambifaria (strain ATCC BAA-244 / DSM 16087 / CCUG 44356 / LMG 19182 / AMMD)</name>
    <name type="common">Burkholderia cepacia (strain AMMD)</name>
    <dbReference type="NCBI Taxonomy" id="339670"/>
    <lineage>
        <taxon>Bacteria</taxon>
        <taxon>Pseudomonadati</taxon>
        <taxon>Pseudomonadota</taxon>
        <taxon>Betaproteobacteria</taxon>
        <taxon>Burkholderiales</taxon>
        <taxon>Burkholderiaceae</taxon>
        <taxon>Burkholderia</taxon>
        <taxon>Burkholderia cepacia complex</taxon>
    </lineage>
</organism>
<feature type="chain" id="PRO_0000336459" description="Dihydroorotate dehydrogenase (quinone)">
    <location>
        <begin position="1"/>
        <end position="345"/>
    </location>
</feature>
<feature type="active site" description="Nucleophile" evidence="1">
    <location>
        <position position="178"/>
    </location>
</feature>
<feature type="binding site" evidence="1">
    <location>
        <begin position="65"/>
        <end position="69"/>
    </location>
    <ligand>
        <name>FMN</name>
        <dbReference type="ChEBI" id="CHEBI:58210"/>
    </ligand>
</feature>
<feature type="binding site" evidence="1">
    <location>
        <position position="69"/>
    </location>
    <ligand>
        <name>substrate</name>
    </ligand>
</feature>
<feature type="binding site" evidence="1">
    <location>
        <position position="89"/>
    </location>
    <ligand>
        <name>FMN</name>
        <dbReference type="ChEBI" id="CHEBI:58210"/>
    </ligand>
</feature>
<feature type="binding site" evidence="1">
    <location>
        <begin position="114"/>
        <end position="118"/>
    </location>
    <ligand>
        <name>substrate</name>
    </ligand>
</feature>
<feature type="binding site" evidence="1">
    <location>
        <position position="142"/>
    </location>
    <ligand>
        <name>FMN</name>
        <dbReference type="ChEBI" id="CHEBI:58210"/>
    </ligand>
</feature>
<feature type="binding site" evidence="1">
    <location>
        <position position="175"/>
    </location>
    <ligand>
        <name>FMN</name>
        <dbReference type="ChEBI" id="CHEBI:58210"/>
    </ligand>
</feature>
<feature type="binding site" evidence="1">
    <location>
        <position position="175"/>
    </location>
    <ligand>
        <name>substrate</name>
    </ligand>
</feature>
<feature type="binding site" evidence="1">
    <location>
        <position position="180"/>
    </location>
    <ligand>
        <name>substrate</name>
    </ligand>
</feature>
<feature type="binding site" evidence="1">
    <location>
        <position position="220"/>
    </location>
    <ligand>
        <name>FMN</name>
        <dbReference type="ChEBI" id="CHEBI:58210"/>
    </ligand>
</feature>
<feature type="binding site" evidence="1">
    <location>
        <position position="248"/>
    </location>
    <ligand>
        <name>FMN</name>
        <dbReference type="ChEBI" id="CHEBI:58210"/>
    </ligand>
</feature>
<feature type="binding site" evidence="1">
    <location>
        <begin position="249"/>
        <end position="250"/>
    </location>
    <ligand>
        <name>substrate</name>
    </ligand>
</feature>
<feature type="binding site" evidence="1">
    <location>
        <position position="271"/>
    </location>
    <ligand>
        <name>FMN</name>
        <dbReference type="ChEBI" id="CHEBI:58210"/>
    </ligand>
</feature>
<feature type="binding site" evidence="1">
    <location>
        <position position="300"/>
    </location>
    <ligand>
        <name>FMN</name>
        <dbReference type="ChEBI" id="CHEBI:58210"/>
    </ligand>
</feature>
<feature type="binding site" evidence="1">
    <location>
        <begin position="321"/>
        <end position="322"/>
    </location>
    <ligand>
        <name>FMN</name>
        <dbReference type="ChEBI" id="CHEBI:58210"/>
    </ligand>
</feature>
<gene>
    <name evidence="1" type="primary">pyrD</name>
    <name type="ordered locus">Bamb_1455</name>
</gene>